<sequence>MDIVGGQNLRQMWDDLAEVYGNKTALIFESSEGVVRQFSYASLNEEINRTANLFLASGIQKGDNVALHLDNCPEFFFCWFGLAKIGAIMVPINARLLREESAWILQNSRAQLIVTSAEFYPMYRQILLEDDTLLNHICLIGENAPVEDNVSHFSQLKDQQPATLCYAPPLSTDDTAEILFTSGTTSRPKGVVITHYNLRFAGYYSSWQCALREDDVYLTVMPAFHIDCQCTAAMAAFSAGSTFVLIEKYSARAFWGQVRKYRATVTECIPMMIRTLMVQPASPEERQHCLREVMFYLNLSVQEKDAFIARFGVRLLTSYGMTETIVGIIGDRPGDKRRWPSIGRPGFCYEADIRDEQNRSLPAGEIGEICIKGVPGKTIFKEYYARPEATAKALEANGWLHTGDSGYRDEEGFFYFVDRRCNMIKRGGENVSCIELENIISAHPKIQDIVVIGIHDSIRDEAIKAFVVLNEGETLTEEEFFAFCEQNMAKFKVPSFLEIRNDLPRNCSGKIIKKNLK</sequence>
<accession>A8ALR6</accession>
<organism>
    <name type="scientific">Citrobacter koseri (strain ATCC BAA-895 / CDC 4225-83 / SGSC4696)</name>
    <dbReference type="NCBI Taxonomy" id="290338"/>
    <lineage>
        <taxon>Bacteria</taxon>
        <taxon>Pseudomonadati</taxon>
        <taxon>Pseudomonadota</taxon>
        <taxon>Gammaproteobacteria</taxon>
        <taxon>Enterobacterales</taxon>
        <taxon>Enterobacteriaceae</taxon>
        <taxon>Citrobacter</taxon>
    </lineage>
</organism>
<gene>
    <name evidence="1" type="primary">caiC</name>
    <name type="ordered locus">CKO_03346</name>
</gene>
<keyword id="KW-0436">Ligase</keyword>
<keyword id="KW-1185">Reference proteome</keyword>
<proteinExistence type="inferred from homology"/>
<protein>
    <recommendedName>
        <fullName evidence="1">Crotonobetaine/carnitine--CoA ligase</fullName>
        <ecNumber evidence="1">6.2.1.48</ecNumber>
    </recommendedName>
</protein>
<dbReference type="EC" id="6.2.1.48" evidence="1"/>
<dbReference type="EMBL" id="CP000822">
    <property type="protein sequence ID" value="ABV14429.1"/>
    <property type="molecule type" value="Genomic_DNA"/>
</dbReference>
<dbReference type="RefSeq" id="WP_012134132.1">
    <property type="nucleotide sequence ID" value="NC_009792.1"/>
</dbReference>
<dbReference type="SMR" id="A8ALR6"/>
<dbReference type="STRING" id="290338.CKO_03346"/>
<dbReference type="GeneID" id="45137109"/>
<dbReference type="KEGG" id="cko:CKO_03346"/>
<dbReference type="HOGENOM" id="CLU_000022_59_0_6"/>
<dbReference type="OrthoDB" id="9803968at2"/>
<dbReference type="UniPathway" id="UPA00117"/>
<dbReference type="Proteomes" id="UP000008148">
    <property type="component" value="Chromosome"/>
</dbReference>
<dbReference type="GO" id="GO:0051108">
    <property type="term" value="F:carnitine-CoA ligase activity"/>
    <property type="evidence" value="ECO:0007669"/>
    <property type="project" value="InterPro"/>
</dbReference>
<dbReference type="GO" id="GO:0051109">
    <property type="term" value="F:crotonobetaine-CoA ligase activity"/>
    <property type="evidence" value="ECO:0007669"/>
    <property type="project" value="InterPro"/>
</dbReference>
<dbReference type="GO" id="GO:0031956">
    <property type="term" value="F:medium-chain fatty acid-CoA ligase activity"/>
    <property type="evidence" value="ECO:0007669"/>
    <property type="project" value="TreeGrafter"/>
</dbReference>
<dbReference type="GO" id="GO:0009437">
    <property type="term" value="P:carnitine metabolic process"/>
    <property type="evidence" value="ECO:0007669"/>
    <property type="project" value="UniProtKB-UniRule"/>
</dbReference>
<dbReference type="GO" id="GO:0006631">
    <property type="term" value="P:fatty acid metabolic process"/>
    <property type="evidence" value="ECO:0007669"/>
    <property type="project" value="TreeGrafter"/>
</dbReference>
<dbReference type="CDD" id="cd05934">
    <property type="entry name" value="FACL_DitJ_like"/>
    <property type="match status" value="1"/>
</dbReference>
<dbReference type="FunFam" id="3.30.300.30:FF:000011">
    <property type="entry name" value="Crotonobetaine/carnitine--CoA ligase"/>
    <property type="match status" value="1"/>
</dbReference>
<dbReference type="Gene3D" id="3.30.300.30">
    <property type="match status" value="1"/>
</dbReference>
<dbReference type="Gene3D" id="3.40.50.12780">
    <property type="entry name" value="N-terminal domain of ligase-like"/>
    <property type="match status" value="1"/>
</dbReference>
<dbReference type="HAMAP" id="MF_01524">
    <property type="entry name" value="CaiC"/>
    <property type="match status" value="1"/>
</dbReference>
<dbReference type="InterPro" id="IPR025110">
    <property type="entry name" value="AMP-bd_C"/>
</dbReference>
<dbReference type="InterPro" id="IPR045851">
    <property type="entry name" value="AMP-bd_C_sf"/>
</dbReference>
<dbReference type="InterPro" id="IPR020845">
    <property type="entry name" value="AMP-binding_CS"/>
</dbReference>
<dbReference type="InterPro" id="IPR000873">
    <property type="entry name" value="AMP-dep_synth/lig_dom"/>
</dbReference>
<dbReference type="InterPro" id="IPR042099">
    <property type="entry name" value="ANL_N_sf"/>
</dbReference>
<dbReference type="InterPro" id="IPR023456">
    <property type="entry name" value="CaiC"/>
</dbReference>
<dbReference type="NCBIfam" id="NF005947">
    <property type="entry name" value="PRK08008.1"/>
    <property type="match status" value="1"/>
</dbReference>
<dbReference type="PANTHER" id="PTHR43201">
    <property type="entry name" value="ACYL-COA SYNTHETASE"/>
    <property type="match status" value="1"/>
</dbReference>
<dbReference type="PANTHER" id="PTHR43201:SF5">
    <property type="entry name" value="MEDIUM-CHAIN ACYL-COA LIGASE ACSF2, MITOCHONDRIAL"/>
    <property type="match status" value="1"/>
</dbReference>
<dbReference type="Pfam" id="PF00501">
    <property type="entry name" value="AMP-binding"/>
    <property type="match status" value="1"/>
</dbReference>
<dbReference type="Pfam" id="PF13193">
    <property type="entry name" value="AMP-binding_C"/>
    <property type="match status" value="1"/>
</dbReference>
<dbReference type="SUPFAM" id="SSF56801">
    <property type="entry name" value="Acetyl-CoA synthetase-like"/>
    <property type="match status" value="1"/>
</dbReference>
<dbReference type="PROSITE" id="PS00455">
    <property type="entry name" value="AMP_BINDING"/>
    <property type="match status" value="1"/>
</dbReference>
<comment type="function">
    <text evidence="1">Catalyzes the transfer of CoA to carnitine, generating the initial carnitinyl-CoA needed for the CaiB reaction cycle. Also has activity toward crotonobetaine and gamma-butyrobetaine.</text>
</comment>
<comment type="catalytic activity">
    <reaction evidence="1">
        <text>4-(trimethylamino)butanoate + ATP + CoA = 4-(trimethylamino)butanoyl-CoA + AMP + diphosphate</text>
        <dbReference type="Rhea" id="RHEA:55960"/>
        <dbReference type="ChEBI" id="CHEBI:16244"/>
        <dbReference type="ChEBI" id="CHEBI:30616"/>
        <dbReference type="ChEBI" id="CHEBI:33019"/>
        <dbReference type="ChEBI" id="CHEBI:57287"/>
        <dbReference type="ChEBI" id="CHEBI:61513"/>
        <dbReference type="ChEBI" id="CHEBI:456215"/>
        <dbReference type="EC" id="6.2.1.48"/>
    </reaction>
</comment>
<comment type="catalytic activity">
    <reaction evidence="1">
        <text>crotonobetaine + ATP + CoA = crotonobetainyl-CoA + AMP + diphosphate</text>
        <dbReference type="Rhea" id="RHEA:30079"/>
        <dbReference type="ChEBI" id="CHEBI:17237"/>
        <dbReference type="ChEBI" id="CHEBI:30616"/>
        <dbReference type="ChEBI" id="CHEBI:33019"/>
        <dbReference type="ChEBI" id="CHEBI:57287"/>
        <dbReference type="ChEBI" id="CHEBI:60933"/>
        <dbReference type="ChEBI" id="CHEBI:456215"/>
        <dbReference type="EC" id="6.2.1.48"/>
    </reaction>
</comment>
<comment type="catalytic activity">
    <reaction evidence="1">
        <text>(R)-carnitine + ATP + CoA = (R)-carnitinyl-CoA + AMP + diphosphate</text>
        <dbReference type="Rhea" id="RHEA:28514"/>
        <dbReference type="ChEBI" id="CHEBI:16347"/>
        <dbReference type="ChEBI" id="CHEBI:30616"/>
        <dbReference type="ChEBI" id="CHEBI:33019"/>
        <dbReference type="ChEBI" id="CHEBI:57287"/>
        <dbReference type="ChEBI" id="CHEBI:60932"/>
        <dbReference type="ChEBI" id="CHEBI:456215"/>
        <dbReference type="EC" id="6.2.1.48"/>
    </reaction>
</comment>
<comment type="pathway">
    <text evidence="1">Amine and polyamine metabolism; carnitine metabolism.</text>
</comment>
<comment type="similarity">
    <text evidence="1">Belongs to the ATP-dependent AMP-binding enzyme family.</text>
</comment>
<name>CAIC_CITK8</name>
<feature type="chain" id="PRO_1000068654" description="Crotonobetaine/carnitine--CoA ligase">
    <location>
        <begin position="1"/>
        <end position="517"/>
    </location>
</feature>
<reference key="1">
    <citation type="submission" date="2007-08" db="EMBL/GenBank/DDBJ databases">
        <authorList>
            <consortium name="The Citrobacter koseri Genome Sequencing Project"/>
            <person name="McClelland M."/>
            <person name="Sanderson E.K."/>
            <person name="Porwollik S."/>
            <person name="Spieth J."/>
            <person name="Clifton W.S."/>
            <person name="Latreille P."/>
            <person name="Courtney L."/>
            <person name="Wang C."/>
            <person name="Pepin K."/>
            <person name="Bhonagiri V."/>
            <person name="Nash W."/>
            <person name="Johnson M."/>
            <person name="Thiruvilangam P."/>
            <person name="Wilson R."/>
        </authorList>
    </citation>
    <scope>NUCLEOTIDE SEQUENCE [LARGE SCALE GENOMIC DNA]</scope>
    <source>
        <strain>ATCC BAA-895 / CDC 4225-83 / SGSC4696</strain>
    </source>
</reference>
<evidence type="ECO:0000255" key="1">
    <source>
        <dbReference type="HAMAP-Rule" id="MF_01524"/>
    </source>
</evidence>